<reference key="1">
    <citation type="journal article" date="2008" name="Foodborne Pathog. Dis.">
        <title>The complete genome sequence and analysis of the human pathogen Campylobacter lari.</title>
        <authorList>
            <person name="Miller W.G."/>
            <person name="Wang G."/>
            <person name="Binnewies T.T."/>
            <person name="Parker C.T."/>
        </authorList>
    </citation>
    <scope>NUCLEOTIDE SEQUENCE [LARGE SCALE GENOMIC DNA]</scope>
    <source>
        <strain>RM2100 / D67 / ATCC BAA-1060</strain>
    </source>
</reference>
<evidence type="ECO:0000255" key="1">
    <source>
        <dbReference type="HAMAP-Rule" id="MF_00034"/>
    </source>
</evidence>
<organism>
    <name type="scientific">Campylobacter lari (strain RM2100 / D67 / ATCC BAA-1060)</name>
    <dbReference type="NCBI Taxonomy" id="306263"/>
    <lineage>
        <taxon>Bacteria</taxon>
        <taxon>Pseudomonadati</taxon>
        <taxon>Campylobacterota</taxon>
        <taxon>Epsilonproteobacteria</taxon>
        <taxon>Campylobacterales</taxon>
        <taxon>Campylobacteraceae</taxon>
        <taxon>Campylobacter</taxon>
    </lineage>
</organism>
<proteinExistence type="inferred from homology"/>
<accession>B9KE83</accession>
<dbReference type="EC" id="3.1.21.10" evidence="1"/>
<dbReference type="EMBL" id="CP000932">
    <property type="protein sequence ID" value="ACM64871.1"/>
    <property type="molecule type" value="Genomic_DNA"/>
</dbReference>
<dbReference type="RefSeq" id="WP_015906705.1">
    <property type="nucleotide sequence ID" value="NC_012039.1"/>
</dbReference>
<dbReference type="SMR" id="B9KE83"/>
<dbReference type="STRING" id="306263.Cla_1573"/>
<dbReference type="KEGG" id="cla:CLA_1573"/>
<dbReference type="PATRIC" id="fig|306263.5.peg.1550"/>
<dbReference type="eggNOG" id="COG0817">
    <property type="taxonomic scope" value="Bacteria"/>
</dbReference>
<dbReference type="HOGENOM" id="CLU_091257_3_0_7"/>
<dbReference type="Proteomes" id="UP000007727">
    <property type="component" value="Chromosome"/>
</dbReference>
<dbReference type="GO" id="GO:0005737">
    <property type="term" value="C:cytoplasm"/>
    <property type="evidence" value="ECO:0007669"/>
    <property type="project" value="UniProtKB-SubCell"/>
</dbReference>
<dbReference type="GO" id="GO:0048476">
    <property type="term" value="C:Holliday junction resolvase complex"/>
    <property type="evidence" value="ECO:0007669"/>
    <property type="project" value="UniProtKB-UniRule"/>
</dbReference>
<dbReference type="GO" id="GO:0008821">
    <property type="term" value="F:crossover junction DNA endonuclease activity"/>
    <property type="evidence" value="ECO:0007669"/>
    <property type="project" value="UniProtKB-UniRule"/>
</dbReference>
<dbReference type="GO" id="GO:0003677">
    <property type="term" value="F:DNA binding"/>
    <property type="evidence" value="ECO:0007669"/>
    <property type="project" value="UniProtKB-KW"/>
</dbReference>
<dbReference type="GO" id="GO:0000287">
    <property type="term" value="F:magnesium ion binding"/>
    <property type="evidence" value="ECO:0007669"/>
    <property type="project" value="UniProtKB-UniRule"/>
</dbReference>
<dbReference type="GO" id="GO:0006310">
    <property type="term" value="P:DNA recombination"/>
    <property type="evidence" value="ECO:0007669"/>
    <property type="project" value="UniProtKB-UniRule"/>
</dbReference>
<dbReference type="GO" id="GO:0006281">
    <property type="term" value="P:DNA repair"/>
    <property type="evidence" value="ECO:0007669"/>
    <property type="project" value="UniProtKB-UniRule"/>
</dbReference>
<dbReference type="CDD" id="cd16962">
    <property type="entry name" value="RuvC"/>
    <property type="match status" value="1"/>
</dbReference>
<dbReference type="FunFam" id="3.30.420.10:FF:000002">
    <property type="entry name" value="Crossover junction endodeoxyribonuclease RuvC"/>
    <property type="match status" value="1"/>
</dbReference>
<dbReference type="Gene3D" id="3.30.420.10">
    <property type="entry name" value="Ribonuclease H-like superfamily/Ribonuclease H"/>
    <property type="match status" value="1"/>
</dbReference>
<dbReference type="HAMAP" id="MF_00034">
    <property type="entry name" value="RuvC"/>
    <property type="match status" value="1"/>
</dbReference>
<dbReference type="InterPro" id="IPR012337">
    <property type="entry name" value="RNaseH-like_sf"/>
</dbReference>
<dbReference type="InterPro" id="IPR036397">
    <property type="entry name" value="RNaseH_sf"/>
</dbReference>
<dbReference type="InterPro" id="IPR020563">
    <property type="entry name" value="X-over_junc_endoDNase_Mg_BS"/>
</dbReference>
<dbReference type="InterPro" id="IPR002176">
    <property type="entry name" value="X-over_junc_endoDNase_RuvC"/>
</dbReference>
<dbReference type="NCBIfam" id="TIGR00228">
    <property type="entry name" value="ruvC"/>
    <property type="match status" value="1"/>
</dbReference>
<dbReference type="PANTHER" id="PTHR30194">
    <property type="entry name" value="CROSSOVER JUNCTION ENDODEOXYRIBONUCLEASE RUVC"/>
    <property type="match status" value="1"/>
</dbReference>
<dbReference type="PANTHER" id="PTHR30194:SF3">
    <property type="entry name" value="CROSSOVER JUNCTION ENDODEOXYRIBONUCLEASE RUVC"/>
    <property type="match status" value="1"/>
</dbReference>
<dbReference type="Pfam" id="PF02075">
    <property type="entry name" value="RuvC"/>
    <property type="match status" value="1"/>
</dbReference>
<dbReference type="PRINTS" id="PR00696">
    <property type="entry name" value="RSOLVASERUVC"/>
</dbReference>
<dbReference type="SUPFAM" id="SSF53098">
    <property type="entry name" value="Ribonuclease H-like"/>
    <property type="match status" value="1"/>
</dbReference>
<dbReference type="PROSITE" id="PS01321">
    <property type="entry name" value="RUVC"/>
    <property type="match status" value="1"/>
</dbReference>
<keyword id="KW-0963">Cytoplasm</keyword>
<keyword id="KW-0227">DNA damage</keyword>
<keyword id="KW-0233">DNA recombination</keyword>
<keyword id="KW-0234">DNA repair</keyword>
<keyword id="KW-0238">DNA-binding</keyword>
<keyword id="KW-0255">Endonuclease</keyword>
<keyword id="KW-0378">Hydrolase</keyword>
<keyword id="KW-0460">Magnesium</keyword>
<keyword id="KW-0479">Metal-binding</keyword>
<keyword id="KW-0540">Nuclease</keyword>
<keyword id="KW-1185">Reference proteome</keyword>
<gene>
    <name evidence="1" type="primary">ruvC</name>
    <name type="ordered locus">Cla_1573</name>
</gene>
<comment type="function">
    <text evidence="1">The RuvA-RuvB-RuvC complex processes Holliday junction (HJ) DNA during genetic recombination and DNA repair. Endonuclease that resolves HJ intermediates. Cleaves cruciform DNA by making single-stranded nicks across the HJ at symmetrical positions within the homologous arms, yielding a 5'-phosphate and a 3'-hydroxyl group; requires a central core of homology in the junction. The consensus cleavage sequence is 5'-(A/T)TT(C/G)-3'. Cleavage occurs on the 3'-side of the TT dinucleotide at the point of strand exchange. HJ branch migration catalyzed by RuvA-RuvB allows RuvC to scan DNA until it finds its consensus sequence, where it cleaves and resolves the cruciform DNA.</text>
</comment>
<comment type="catalytic activity">
    <reaction evidence="1">
        <text>Endonucleolytic cleavage at a junction such as a reciprocal single-stranded crossover between two homologous DNA duplexes (Holliday junction).</text>
        <dbReference type="EC" id="3.1.21.10"/>
    </reaction>
</comment>
<comment type="cofactor">
    <cofactor evidence="1">
        <name>Mg(2+)</name>
        <dbReference type="ChEBI" id="CHEBI:18420"/>
    </cofactor>
    <text evidence="1">Binds 2 Mg(2+) ion per subunit.</text>
</comment>
<comment type="subunit">
    <text evidence="1">Homodimer which binds Holliday junction (HJ) DNA. The HJ becomes 2-fold symmetrical on binding to RuvC with unstacked arms; it has a different conformation from HJ DNA in complex with RuvA. In the full resolvosome a probable DNA-RuvA(4)-RuvB(12)-RuvC(2) complex forms which resolves the HJ.</text>
</comment>
<comment type="subcellular location">
    <subcellularLocation>
        <location evidence="1">Cytoplasm</location>
    </subcellularLocation>
</comment>
<comment type="similarity">
    <text evidence="1">Belongs to the RuvC family.</text>
</comment>
<name>RUVC_CAMLR</name>
<sequence length="158" mass="17719">MKVLGIDPGSRYCGYAIVEKINNKNQLIEAGLIKIKPNDLQYQITELCEGLDLIFKNHQFDEVAIEDIFFAYNPKTVLKLAQFRGALSLKILQMHGEFAEYTPLQVKKTVTGKAKATKEQVAFMVKRLLGISKDIKPLDITDAIAVALTHSANLRVKK</sequence>
<feature type="chain" id="PRO_1000195242" description="Crossover junction endodeoxyribonuclease RuvC">
    <location>
        <begin position="1"/>
        <end position="158"/>
    </location>
</feature>
<feature type="active site" evidence="1">
    <location>
        <position position="7"/>
    </location>
</feature>
<feature type="active site" evidence="1">
    <location>
        <position position="66"/>
    </location>
</feature>
<feature type="active site" evidence="1">
    <location>
        <position position="139"/>
    </location>
</feature>
<feature type="binding site" evidence="1">
    <location>
        <position position="7"/>
    </location>
    <ligand>
        <name>Mg(2+)</name>
        <dbReference type="ChEBI" id="CHEBI:18420"/>
        <label>1</label>
    </ligand>
</feature>
<feature type="binding site" evidence="1">
    <location>
        <position position="66"/>
    </location>
    <ligand>
        <name>Mg(2+)</name>
        <dbReference type="ChEBI" id="CHEBI:18420"/>
        <label>2</label>
    </ligand>
</feature>
<feature type="binding site" evidence="1">
    <location>
        <position position="139"/>
    </location>
    <ligand>
        <name>Mg(2+)</name>
        <dbReference type="ChEBI" id="CHEBI:18420"/>
        <label>1</label>
    </ligand>
</feature>
<protein>
    <recommendedName>
        <fullName evidence="1">Crossover junction endodeoxyribonuclease RuvC</fullName>
        <ecNumber evidence="1">3.1.21.10</ecNumber>
    </recommendedName>
    <alternativeName>
        <fullName evidence="1">Holliday junction nuclease RuvC</fullName>
    </alternativeName>
    <alternativeName>
        <fullName evidence="1">Holliday junction resolvase RuvC</fullName>
    </alternativeName>
</protein>